<comment type="function">
    <text evidence="2">This toxin inhibits the binding of [3H]quinuclidinyl benzilate to the M2 muscarinic acetylcholine (mAchR) receptor subtype (CHRM2).</text>
</comment>
<comment type="subcellular location">
    <subcellularLocation>
        <location evidence="2">Secreted</location>
    </subcellularLocation>
</comment>
<comment type="tissue specificity">
    <text evidence="4">Expressed by the venom gland.</text>
</comment>
<comment type="mass spectrometry" mass="9075.0" method="Electrospray" evidence="2"/>
<comment type="miscellaneous">
    <text evidence="2">Negative results: does not bind to receptor M1 (CHRM1). Is unable to compete with alpha-bungarotoxin for binding to nAchR at concentrations up to 100 uM. Does not manifest cytotoxicity toward myelogenous leukemia cells. Is not toxic to mice at doses up to 3 mg/kg.</text>
</comment>
<comment type="similarity">
    <text evidence="4">Belongs to the three-finger toxin family. Ancestral subfamily. Orphan group XVII sub-subfamily.</text>
</comment>
<dbReference type="EMBL" id="AJ421675">
    <property type="protein sequence ID" value="CAD18848.1"/>
    <property type="molecule type" value="Genomic_DNA"/>
</dbReference>
<dbReference type="SMR" id="Q8JFX7"/>
<dbReference type="GO" id="GO:0005576">
    <property type="term" value="C:extracellular region"/>
    <property type="evidence" value="ECO:0007669"/>
    <property type="project" value="UniProtKB-SubCell"/>
</dbReference>
<dbReference type="GO" id="GO:0090729">
    <property type="term" value="F:toxin activity"/>
    <property type="evidence" value="ECO:0007669"/>
    <property type="project" value="UniProtKB-KW"/>
</dbReference>
<dbReference type="CDD" id="cd00206">
    <property type="entry name" value="TFP_snake_toxin"/>
    <property type="match status" value="1"/>
</dbReference>
<dbReference type="Gene3D" id="2.10.60.10">
    <property type="entry name" value="CD59"/>
    <property type="match status" value="1"/>
</dbReference>
<dbReference type="InterPro" id="IPR003571">
    <property type="entry name" value="Snake_3FTx"/>
</dbReference>
<dbReference type="InterPro" id="IPR045860">
    <property type="entry name" value="Snake_toxin-like_sf"/>
</dbReference>
<dbReference type="SUPFAM" id="SSF57302">
    <property type="entry name" value="Snake toxin-like"/>
    <property type="match status" value="1"/>
</dbReference>
<sequence length="103" mass="11390">MKTLLLTLVVVTIICLDLGYTEMCNMCVRPYPFMSSCCPEGQDRCYKSYWVNENGKQKKYHGKYPVILERGCVTACTGPGSGSIYNLYTCCPTNRCGSSSTSG</sequence>
<feature type="signal peptide" evidence="2">
    <location>
        <begin position="1"/>
        <end position="21"/>
    </location>
</feature>
<feature type="chain" id="PRO_5000068180" description="Muscarinic toxin BM14" evidence="2">
    <location>
        <begin position="22"/>
        <end position="103"/>
    </location>
</feature>
<feature type="site" description="Plays a crucial role in mAChR-binding activity">
    <location>
        <begin position="58"/>
        <end position="59"/>
    </location>
</feature>
<feature type="disulfide bond" evidence="1">
    <location>
        <begin position="24"/>
        <end position="45"/>
    </location>
</feature>
<feature type="disulfide bond" evidence="1">
    <location>
        <begin position="27"/>
        <end position="37"/>
    </location>
</feature>
<feature type="disulfide bond" evidence="1">
    <location>
        <begin position="38"/>
        <end position="72"/>
    </location>
</feature>
<feature type="disulfide bond" evidence="1">
    <location>
        <begin position="76"/>
        <end position="90"/>
    </location>
</feature>
<feature type="disulfide bond" evidence="1">
    <location>
        <begin position="91"/>
        <end position="96"/>
    </location>
</feature>
<accession>Q8JFX7</accession>
<protein>
    <recommendedName>
        <fullName evidence="3">Muscarinic toxin BM14</fullName>
    </recommendedName>
</protein>
<reference key="1">
    <citation type="journal article" date="2002" name="Biol. Chem.">
        <title>Muscarinic toxin-like proteins from Taiwan banded krait (Bungarus multicinctus) venom: purification, characterization and gene organization.</title>
        <authorList>
            <person name="Chung C."/>
            <person name="Wu B.N."/>
            <person name="Yang C.C."/>
            <person name="Chang L.S."/>
        </authorList>
    </citation>
    <scope>NUCLEOTIDE SEQUENCE [GENOMIC DNA]</scope>
    <scope>PROTEIN SEQUENCE OF 22-103</scope>
    <scope>FUNCTION</scope>
    <scope>SITE</scope>
    <scope>MASS SPECTROMETRY</scope>
    <scope>SUBCELLULAR LOCATION</scope>
    <source>
        <tissue>Liver</tissue>
        <tissue>Venom</tissue>
    </source>
</reference>
<name>3NOHE_BUNMU</name>
<organism>
    <name type="scientific">Bungarus multicinctus</name>
    <name type="common">Many-banded krait</name>
    <dbReference type="NCBI Taxonomy" id="8616"/>
    <lineage>
        <taxon>Eukaryota</taxon>
        <taxon>Metazoa</taxon>
        <taxon>Chordata</taxon>
        <taxon>Craniata</taxon>
        <taxon>Vertebrata</taxon>
        <taxon>Euteleostomi</taxon>
        <taxon>Lepidosauria</taxon>
        <taxon>Squamata</taxon>
        <taxon>Bifurcata</taxon>
        <taxon>Unidentata</taxon>
        <taxon>Episquamata</taxon>
        <taxon>Toxicofera</taxon>
        <taxon>Serpentes</taxon>
        <taxon>Colubroidea</taxon>
        <taxon>Elapidae</taxon>
        <taxon>Bungarinae</taxon>
        <taxon>Bungarus</taxon>
    </lineage>
</organism>
<proteinExistence type="evidence at protein level"/>
<keyword id="KW-0903">Direct protein sequencing</keyword>
<keyword id="KW-1015">Disulfide bond</keyword>
<keyword id="KW-1214">G-protein coupled acetylcholine receptor impairing toxin</keyword>
<keyword id="KW-1213">G-protein coupled receptor impairing toxin</keyword>
<keyword id="KW-0528">Neurotoxin</keyword>
<keyword id="KW-0629">Postsynaptic neurotoxin</keyword>
<keyword id="KW-0964">Secreted</keyword>
<keyword id="KW-0732">Signal</keyword>
<keyword id="KW-0800">Toxin</keyword>
<evidence type="ECO:0000250" key="1">
    <source>
        <dbReference type="UniProtKB" id="P81782"/>
    </source>
</evidence>
<evidence type="ECO:0000269" key="2">
    <source>
    </source>
</evidence>
<evidence type="ECO:0000303" key="3">
    <source>
    </source>
</evidence>
<evidence type="ECO:0000305" key="4"/>